<dbReference type="EMBL" id="Y14660">
    <property type="protein sequence ID" value="CAA74989.1"/>
    <property type="molecule type" value="mRNA"/>
</dbReference>
<dbReference type="EMBL" id="BC009812">
    <property type="protein sequence ID" value="AAH09812.1"/>
    <property type="molecule type" value="mRNA"/>
</dbReference>
<dbReference type="CCDS" id="CCDS20226.1"/>
<dbReference type="PIR" id="A32640">
    <property type="entry name" value="A32640"/>
</dbReference>
<dbReference type="RefSeq" id="NP_059095.1">
    <property type="nucleotide sequence ID" value="NM_017399.5"/>
</dbReference>
<dbReference type="SMR" id="P12710"/>
<dbReference type="BioGRID" id="199584">
    <property type="interactions" value="4"/>
</dbReference>
<dbReference type="FunCoup" id="P12710">
    <property type="interactions" value="856"/>
</dbReference>
<dbReference type="IntAct" id="P12710">
    <property type="interactions" value="2"/>
</dbReference>
<dbReference type="STRING" id="10090.ENSMUSP00000064655"/>
<dbReference type="BindingDB" id="P12710"/>
<dbReference type="GuidetoPHARMACOLOGY" id="2531"/>
<dbReference type="CarbonylDB" id="P12710"/>
<dbReference type="GlyGen" id="P12710">
    <property type="glycosylation" value="2 sites, 1 N-linked glycan (1 site), 1 O-linked glycan (1 site)"/>
</dbReference>
<dbReference type="iPTMnet" id="P12710"/>
<dbReference type="PhosphoSitePlus" id="P12710"/>
<dbReference type="SwissPalm" id="P12710"/>
<dbReference type="jPOST" id="P12710"/>
<dbReference type="PaxDb" id="10090-ENSMUSP00000064655"/>
<dbReference type="PeptideAtlas" id="P12710"/>
<dbReference type="ProteomicsDB" id="267704"/>
<dbReference type="Antibodypedia" id="3707">
    <property type="antibodies" value="715 antibodies from 40 providers"/>
</dbReference>
<dbReference type="DNASU" id="14080"/>
<dbReference type="Ensembl" id="ENSMUST00000067492.8">
    <property type="protein sequence ID" value="ENSMUSP00000064655.8"/>
    <property type="gene ID" value="ENSMUSG00000054422.8"/>
</dbReference>
<dbReference type="GeneID" id="14080"/>
<dbReference type="KEGG" id="mmu:14080"/>
<dbReference type="UCSC" id="uc009cgh.1">
    <property type="organism name" value="mouse"/>
</dbReference>
<dbReference type="AGR" id="MGI:95479"/>
<dbReference type="CTD" id="2168"/>
<dbReference type="MGI" id="MGI:95479">
    <property type="gene designation" value="Fabp1"/>
</dbReference>
<dbReference type="VEuPathDB" id="HostDB:ENSMUSG00000054422"/>
<dbReference type="eggNOG" id="KOG4015">
    <property type="taxonomic scope" value="Eukaryota"/>
</dbReference>
<dbReference type="GeneTree" id="ENSGT00940000155135"/>
<dbReference type="HOGENOM" id="CLU_113772_4_2_1"/>
<dbReference type="InParanoid" id="P12710"/>
<dbReference type="OMA" id="GKYQVQT"/>
<dbReference type="OrthoDB" id="9971011at2759"/>
<dbReference type="PhylomeDB" id="P12710"/>
<dbReference type="TreeFam" id="TF330348"/>
<dbReference type="Reactome" id="R-MMU-163560">
    <property type="pathway name" value="Triglyceride catabolism"/>
</dbReference>
<dbReference type="Reactome" id="R-MMU-189483">
    <property type="pathway name" value="Heme degradation"/>
</dbReference>
<dbReference type="Reactome" id="R-MMU-400206">
    <property type="pathway name" value="Regulation of lipid metabolism by PPARalpha"/>
</dbReference>
<dbReference type="Reactome" id="R-MMU-9707564">
    <property type="pathway name" value="Cytoprotection by HMOX1"/>
</dbReference>
<dbReference type="BioGRID-ORCS" id="14080">
    <property type="hits" value="3 hits in 79 CRISPR screens"/>
</dbReference>
<dbReference type="ChiTaRS" id="Fabp1">
    <property type="organism name" value="mouse"/>
</dbReference>
<dbReference type="PRO" id="PR:P12710"/>
<dbReference type="Proteomes" id="UP000000589">
    <property type="component" value="Chromosome 6"/>
</dbReference>
<dbReference type="RNAct" id="P12710">
    <property type="molecule type" value="protein"/>
</dbReference>
<dbReference type="Bgee" id="ENSMUSG00000054422">
    <property type="expression patterns" value="Expressed in small intestine Peyer's patch and 107 other cell types or tissues"/>
</dbReference>
<dbReference type="ExpressionAtlas" id="P12710">
    <property type="expression patterns" value="baseline and differential"/>
</dbReference>
<dbReference type="GO" id="GO:0005737">
    <property type="term" value="C:cytoplasm"/>
    <property type="evidence" value="ECO:0000314"/>
    <property type="project" value="MGI"/>
</dbReference>
<dbReference type="GO" id="GO:0005829">
    <property type="term" value="C:cytosol"/>
    <property type="evidence" value="ECO:0007669"/>
    <property type="project" value="Ensembl"/>
</dbReference>
<dbReference type="GO" id="GO:0005654">
    <property type="term" value="C:nucleoplasm"/>
    <property type="evidence" value="ECO:0007669"/>
    <property type="project" value="Ensembl"/>
</dbReference>
<dbReference type="GO" id="GO:0005634">
    <property type="term" value="C:nucleus"/>
    <property type="evidence" value="ECO:0000314"/>
    <property type="project" value="MGI"/>
</dbReference>
<dbReference type="GO" id="GO:0016209">
    <property type="term" value="F:antioxidant activity"/>
    <property type="evidence" value="ECO:0007669"/>
    <property type="project" value="Ensembl"/>
</dbReference>
<dbReference type="GO" id="GO:0003682">
    <property type="term" value="F:chromatin binding"/>
    <property type="evidence" value="ECO:0000314"/>
    <property type="project" value="MGI"/>
</dbReference>
<dbReference type="GO" id="GO:0005504">
    <property type="term" value="F:fatty acid binding"/>
    <property type="evidence" value="ECO:0000266"/>
    <property type="project" value="MGI"/>
</dbReference>
<dbReference type="GO" id="GO:0070301">
    <property type="term" value="P:cellular response to hydrogen peroxide"/>
    <property type="evidence" value="ECO:0007669"/>
    <property type="project" value="Ensembl"/>
</dbReference>
<dbReference type="GO" id="GO:0071456">
    <property type="term" value="P:cellular response to hypoxia"/>
    <property type="evidence" value="ECO:0007669"/>
    <property type="project" value="Ensembl"/>
</dbReference>
<dbReference type="CDD" id="cd19444">
    <property type="entry name" value="FABP1"/>
    <property type="match status" value="1"/>
</dbReference>
<dbReference type="FunFam" id="2.40.128.20:FF:000006">
    <property type="entry name" value="Fatty acid-binding protein, liver"/>
    <property type="match status" value="1"/>
</dbReference>
<dbReference type="Gene3D" id="2.40.128.20">
    <property type="match status" value="1"/>
</dbReference>
<dbReference type="InterPro" id="IPR012674">
    <property type="entry name" value="Calycin"/>
</dbReference>
<dbReference type="InterPro" id="IPR000463">
    <property type="entry name" value="Fatty_acid-bd"/>
</dbReference>
<dbReference type="InterPro" id="IPR031259">
    <property type="entry name" value="ILBP"/>
</dbReference>
<dbReference type="PANTHER" id="PTHR11955">
    <property type="entry name" value="FATTY ACID BINDING PROTEIN"/>
    <property type="match status" value="1"/>
</dbReference>
<dbReference type="Pfam" id="PF14651">
    <property type="entry name" value="Lipocalin_7"/>
    <property type="match status" value="1"/>
</dbReference>
<dbReference type="PRINTS" id="PR00178">
    <property type="entry name" value="FATTYACIDBP"/>
</dbReference>
<dbReference type="SUPFAM" id="SSF50814">
    <property type="entry name" value="Lipocalins"/>
    <property type="match status" value="1"/>
</dbReference>
<dbReference type="PROSITE" id="PS00214">
    <property type="entry name" value="FABP"/>
    <property type="match status" value="1"/>
</dbReference>
<reference key="1">
    <citation type="submission" date="1997-07" db="EMBL/GenBank/DDBJ databases">
        <authorList>
            <person name="Wolfrum C."/>
            <person name="Ellinghaus P."/>
            <person name="Kannenberg F."/>
            <person name="Seedorf U."/>
            <person name="Assmann G."/>
            <person name="Boerchers T."/>
            <person name="Spener F."/>
        </authorList>
    </citation>
    <scope>NUCLEOTIDE SEQUENCE [MRNA]</scope>
    <source>
        <tissue>Liver</tissue>
    </source>
</reference>
<reference key="2">
    <citation type="journal article" date="2004" name="Genome Res.">
        <title>The status, quality, and expansion of the NIH full-length cDNA project: the Mammalian Gene Collection (MGC).</title>
        <authorList>
            <consortium name="The MGC Project Team"/>
        </authorList>
    </citation>
    <scope>NUCLEOTIDE SEQUENCE [LARGE SCALE MRNA]</scope>
    <source>
        <tissue>Liver</tissue>
    </source>
</reference>
<reference key="3">
    <citation type="journal article" date="1989" name="J. Biol. Chem.">
        <title>A 14-kilodalton selenium-binding protein in mouse liver is fatty acid-binding protein.</title>
        <authorList>
            <person name="Bansai M.P."/>
            <person name="Cook R.G."/>
            <person name="Danielson K.G."/>
            <person name="Medina D."/>
        </authorList>
    </citation>
    <scope>PROTEIN SEQUENCE OF 21-113</scope>
</reference>
<reference key="4">
    <citation type="journal article" date="2010" name="Cell">
        <title>A tissue-specific atlas of mouse protein phosphorylation and expression.</title>
        <authorList>
            <person name="Huttlin E.L."/>
            <person name="Jedrychowski M.P."/>
            <person name="Elias J.E."/>
            <person name="Goswami T."/>
            <person name="Rad R."/>
            <person name="Beausoleil S.A."/>
            <person name="Villen J."/>
            <person name="Haas W."/>
            <person name="Sowa M.E."/>
            <person name="Gygi S.P."/>
        </authorList>
    </citation>
    <scope>PHOSPHORYLATION [LARGE SCALE ANALYSIS] AT SER-11 AND SER-100</scope>
    <scope>IDENTIFICATION BY MASS SPECTROMETRY [LARGE SCALE ANALYSIS]</scope>
    <source>
        <tissue>Kidney</tissue>
        <tissue>Liver</tissue>
        <tissue>Lung</tissue>
        <tissue>Pancreas</tissue>
    </source>
</reference>
<reference key="5">
    <citation type="journal article" date="2013" name="Mol. Cell">
        <title>SIRT5-mediated lysine desuccinylation impacts diverse metabolic pathways.</title>
        <authorList>
            <person name="Park J."/>
            <person name="Chen Y."/>
            <person name="Tishkoff D.X."/>
            <person name="Peng C."/>
            <person name="Tan M."/>
            <person name="Dai L."/>
            <person name="Xie Z."/>
            <person name="Zhang Y."/>
            <person name="Zwaans B.M."/>
            <person name="Skinner M.E."/>
            <person name="Lombard D.B."/>
            <person name="Zhao Y."/>
        </authorList>
    </citation>
    <scope>SUCCINYLATION [LARGE SCALE ANALYSIS] AT LYS-31; LYS-36; LYS-46; LYS-57; LYS-78; LYS-84; LYS-90 AND LYS-121</scope>
    <scope>IDENTIFICATION BY MASS SPECTROMETRY [LARGE SCALE ANALYSIS]</scope>
    <source>
        <tissue>Liver</tissue>
    </source>
</reference>
<reference key="6">
    <citation type="journal article" date="2013" name="Proc. Natl. Acad. Sci. U.S.A.">
        <title>Label-free quantitative proteomics of the lysine acetylome in mitochondria identifies substrates of SIRT3 in metabolic pathways.</title>
        <authorList>
            <person name="Rardin M.J."/>
            <person name="Newman J.C."/>
            <person name="Held J.M."/>
            <person name="Cusack M.P."/>
            <person name="Sorensen D.J."/>
            <person name="Li B."/>
            <person name="Schilling B."/>
            <person name="Mooney S.D."/>
            <person name="Kahn C.R."/>
            <person name="Verdin E."/>
            <person name="Gibson B.W."/>
        </authorList>
    </citation>
    <scope>ACETYLATION [LARGE SCALE ANALYSIS] AT LYS-84</scope>
    <scope>IDENTIFICATION BY MASS SPECTROMETRY [LARGE SCALE ANALYSIS]</scope>
    <source>
        <tissue>Liver</tissue>
    </source>
</reference>
<name>FABPL_MOUSE</name>
<accession>P12710</accession>
<feature type="chain" id="PRO_0000067335" description="Fatty acid-binding protein, liver">
    <location>
        <begin position="1"/>
        <end position="127"/>
    </location>
</feature>
<feature type="modified residue" description="N-acetylmethionine" evidence="4">
    <location>
        <position position="1"/>
    </location>
</feature>
<feature type="modified residue" description="Phosphoserine" evidence="7">
    <location>
        <position position="11"/>
    </location>
</feature>
<feature type="modified residue" description="N6-succinyllysine" evidence="9">
    <location>
        <position position="31"/>
    </location>
</feature>
<feature type="modified residue" description="N6-succinyllysine" evidence="9">
    <location>
        <position position="36"/>
    </location>
</feature>
<feature type="modified residue" description="Phosphoserine" evidence="2">
    <location>
        <position position="39"/>
    </location>
</feature>
<feature type="modified residue" description="N6-succinyllysine" evidence="9">
    <location>
        <position position="46"/>
    </location>
</feature>
<feature type="modified residue" description="Phosphothreonine" evidence="3">
    <location>
        <position position="51"/>
    </location>
</feature>
<feature type="modified residue" description="N6-succinyllysine" evidence="9">
    <location>
        <position position="57"/>
    </location>
</feature>
<feature type="modified residue" description="N6-succinyllysine" evidence="9">
    <location>
        <position position="78"/>
    </location>
</feature>
<feature type="modified residue" description="N6-acetyllysine; alternate" evidence="8">
    <location>
        <position position="84"/>
    </location>
</feature>
<feature type="modified residue" description="N6-succinyllysine; alternate" evidence="9">
    <location>
        <position position="84"/>
    </location>
</feature>
<feature type="modified residue" description="N6-succinyllysine" evidence="9">
    <location>
        <position position="90"/>
    </location>
</feature>
<feature type="modified residue" description="Phosphoserine" evidence="7">
    <location>
        <position position="100"/>
    </location>
</feature>
<feature type="modified residue" description="N6-succinyllysine" evidence="9">
    <location>
        <position position="121"/>
    </location>
</feature>
<sequence>MNFSGKYQLQSQENFEPFMKAIGLPEDLIQKGKDIKGVSEIVHEGKKIKLTITYGPKVVRNEFTLGEECELETMTGEKVKAVVKLEGDNKMVTTFKGIKSVTELNGDTITNTMTLGDIVYKRVSKRI</sequence>
<comment type="function">
    <text evidence="3 5">Plays a role in lipoprotein-mediated cholesterol uptake in hepatocytes. Binds cholesterol. Binds free fatty acids and their coenzyme A derivatives, bilirubin, and some other small molecules in the cytoplasm. May be involved in intracellular lipid transport.</text>
</comment>
<comment type="subcellular location">
    <subcellularLocation>
        <location>Cytoplasm</location>
    </subcellularLocation>
</comment>
<comment type="domain">
    <text evidence="1">Forms a beta-barrel structure that accommodates hydrophobic ligands in its interior.</text>
</comment>
<comment type="similarity">
    <text evidence="6">Belongs to the calycin superfamily. Fatty-acid binding protein (FABP) family.</text>
</comment>
<organism>
    <name type="scientific">Mus musculus</name>
    <name type="common">Mouse</name>
    <dbReference type="NCBI Taxonomy" id="10090"/>
    <lineage>
        <taxon>Eukaryota</taxon>
        <taxon>Metazoa</taxon>
        <taxon>Chordata</taxon>
        <taxon>Craniata</taxon>
        <taxon>Vertebrata</taxon>
        <taxon>Euteleostomi</taxon>
        <taxon>Mammalia</taxon>
        <taxon>Eutheria</taxon>
        <taxon>Euarchontoglires</taxon>
        <taxon>Glires</taxon>
        <taxon>Rodentia</taxon>
        <taxon>Myomorpha</taxon>
        <taxon>Muroidea</taxon>
        <taxon>Muridae</taxon>
        <taxon>Murinae</taxon>
        <taxon>Mus</taxon>
        <taxon>Mus</taxon>
    </lineage>
</organism>
<evidence type="ECO:0000250" key="1"/>
<evidence type="ECO:0000250" key="2">
    <source>
        <dbReference type="UniProtKB" id="P02692"/>
    </source>
</evidence>
<evidence type="ECO:0000250" key="3">
    <source>
        <dbReference type="UniProtKB" id="P07148"/>
    </source>
</evidence>
<evidence type="ECO:0000250" key="4">
    <source>
        <dbReference type="UniProtKB" id="P80425"/>
    </source>
</evidence>
<evidence type="ECO:0000250" key="5">
    <source>
        <dbReference type="UniProtKB" id="P82289"/>
    </source>
</evidence>
<evidence type="ECO:0000305" key="6"/>
<evidence type="ECO:0007744" key="7">
    <source>
    </source>
</evidence>
<evidence type="ECO:0007744" key="8">
    <source>
    </source>
</evidence>
<evidence type="ECO:0007744" key="9">
    <source>
    </source>
</evidence>
<protein>
    <recommendedName>
        <fullName>Fatty acid-binding protein, liver</fullName>
    </recommendedName>
    <alternativeName>
        <fullName>14 kDa selenium-binding protein</fullName>
    </alternativeName>
    <alternativeName>
        <fullName>Fatty acid-binding protein 1</fullName>
    </alternativeName>
    <alternativeName>
        <fullName>Liver-type fatty acid-binding protein</fullName>
        <shortName>L-FABP</shortName>
    </alternativeName>
</protein>
<proteinExistence type="evidence at protein level"/>
<gene>
    <name type="primary">Fabp1</name>
    <name type="synonym">Fabpl</name>
</gene>
<keyword id="KW-0007">Acetylation</keyword>
<keyword id="KW-0963">Cytoplasm</keyword>
<keyword id="KW-0903">Direct protein sequencing</keyword>
<keyword id="KW-0446">Lipid-binding</keyword>
<keyword id="KW-0597">Phosphoprotein</keyword>
<keyword id="KW-1185">Reference proteome</keyword>
<keyword id="KW-0711">Selenium</keyword>
<keyword id="KW-0813">Transport</keyword>